<proteinExistence type="evidence at protein level"/>
<comment type="function">
    <text>May play a role in the molecular organization of synapses and neuronal cell signaling. Could be an adapter protein linking ion channel to the subsynaptic cytoskeleton. May induce enrichment of PSD-95/SAP90 at the plasma membrane.</text>
</comment>
<comment type="subunit">
    <text evidence="1">Interacts with DLG1 and DLG4/PSD-95.</text>
</comment>
<comment type="interaction">
    <interactant intactId="EBI-722139">
        <id>Q9Y2H0</id>
    </interactant>
    <interactant intactId="EBI-719094">
        <id>O00499</id>
        <label>BIN1</label>
    </interactant>
    <organismsDiffer>false</organismsDiffer>
    <experiments>4</experiments>
</comment>
<comment type="interaction">
    <interactant intactId="EBI-722139">
        <id>Q9Y2H0</id>
    </interactant>
    <interactant intactId="EBI-401755">
        <id>P62993</id>
        <label>GRB2</label>
    </interactant>
    <organismsDiffer>false</organismsDiffer>
    <experiments>2</experiments>
</comment>
<comment type="interaction">
    <interactant intactId="EBI-722139">
        <id>Q9Y2H0</id>
    </interactant>
    <interactant intactId="EBI-389883">
        <id>P16333</id>
        <label>NCK1</label>
    </interactant>
    <organismsDiffer>false</organismsDiffer>
    <experiments>5</experiments>
</comment>
<comment type="interaction">
    <interactant intactId="EBI-722139">
        <id>Q9Y2H0</id>
    </interactant>
    <interactant intactId="EBI-79464">
        <id>P27986</id>
        <label>PIK3R1</label>
    </interactant>
    <organismsDiffer>false</organismsDiffer>
    <experiments>2</experiments>
</comment>
<comment type="interaction">
    <interactant intactId="EBI-12000556">
        <id>Q9Y2H0-1</id>
    </interactant>
    <interactant intactId="EBI-11096309">
        <id>Q9NYB9-2</id>
        <label>ABI2</label>
    </interactant>
    <organismsDiffer>false</organismsDiffer>
    <experiments>3</experiments>
</comment>
<comment type="interaction">
    <interactant intactId="EBI-12000556">
        <id>Q9Y2H0-1</id>
    </interactant>
    <interactant intactId="EBI-1044483">
        <id>Q8IZ83</id>
        <label>ALDH16A1</label>
    </interactant>
    <organismsDiffer>false</organismsDiffer>
    <experiments>3</experiments>
</comment>
<comment type="interaction">
    <interactant intactId="EBI-12000556">
        <id>Q9Y2H0-1</id>
    </interactant>
    <interactant intactId="EBI-1166928">
        <id>Q8N5M1</id>
        <label>ATPAF2</label>
    </interactant>
    <organismsDiffer>false</organismsDiffer>
    <experiments>3</experiments>
</comment>
<comment type="interaction">
    <interactant intactId="EBI-12000556">
        <id>Q9Y2H0-1</id>
    </interactant>
    <interactant intactId="EBI-741101">
        <id>Q13643</id>
        <label>FHL3</label>
    </interactant>
    <organismsDiffer>false</organismsDiffer>
    <experiments>3</experiments>
</comment>
<comment type="interaction">
    <interactant intactId="EBI-12000556">
        <id>Q9Y2H0-1</id>
    </interactant>
    <interactant intactId="EBI-750641">
        <id>Q5TD97</id>
        <label>FHL5</label>
    </interactant>
    <organismsDiffer>false</organismsDiffer>
    <experiments>3</experiments>
</comment>
<comment type="interaction">
    <interactant intactId="EBI-12000556">
        <id>Q9Y2H0-1</id>
    </interactant>
    <interactant intactId="EBI-744771">
        <id>O75344</id>
        <label>FKBP6</label>
    </interactant>
    <organismsDiffer>false</organismsDiffer>
    <experiments>3</experiments>
</comment>
<comment type="interaction">
    <interactant intactId="EBI-12000556">
        <id>Q9Y2H0-1</id>
    </interactant>
    <interactant intactId="EBI-10691738">
        <id>P06241-3</id>
        <label>FYN</label>
    </interactant>
    <organismsDiffer>false</organismsDiffer>
    <experiments>3</experiments>
</comment>
<comment type="interaction">
    <interactant intactId="EBI-12000556">
        <id>Q9Y2H0-1</id>
    </interactant>
    <interactant intactId="EBI-1045155">
        <id>P43360</id>
        <label>MAGEA6</label>
    </interactant>
    <organismsDiffer>false</organismsDiffer>
    <experiments>3</experiments>
</comment>
<comment type="interaction">
    <interactant intactId="EBI-12000556">
        <id>Q9Y2H0-1</id>
    </interactant>
    <interactant intactId="EBI-2514004">
        <id>Q5T2T1</id>
        <label>MPP7</label>
    </interactant>
    <organismsDiffer>false</organismsDiffer>
    <experiments>3</experiments>
</comment>
<comment type="interaction">
    <interactant intactId="EBI-12000556">
        <id>Q9Y2H0-1</id>
    </interactant>
    <interactant intactId="EBI-11522433">
        <id>Q5JR59-3</id>
        <label>MTUS2</label>
    </interactant>
    <organismsDiffer>false</organismsDiffer>
    <experiments>3</experiments>
</comment>
<comment type="interaction">
    <interactant intactId="EBI-12000556">
        <id>Q9Y2H0-1</id>
    </interactant>
    <interactant intactId="EBI-389883">
        <id>P16333</id>
        <label>NCK1</label>
    </interactant>
    <organismsDiffer>false</organismsDiffer>
    <experiments>3</experiments>
</comment>
<comment type="interaction">
    <interactant intactId="EBI-12000556">
        <id>Q9Y2H0-1</id>
    </interactant>
    <interactant intactId="EBI-713635">
        <id>O43639</id>
        <label>NCK2</label>
    </interactant>
    <organismsDiffer>false</organismsDiffer>
    <experiments>6</experiments>
</comment>
<comment type="interaction">
    <interactant intactId="EBI-12000556">
        <id>Q9Y2H0-1</id>
    </interactant>
    <interactant intactId="EBI-349787">
        <id>O14745</id>
        <label>NHERF1</label>
    </interactant>
    <organismsDiffer>false</organismsDiffer>
    <experiments>3</experiments>
</comment>
<comment type="interaction">
    <interactant intactId="EBI-12000556">
        <id>Q9Y2H0-1</id>
    </interactant>
    <interactant intactId="EBI-1149760">
        <id>Q15599</id>
        <label>NHERF2</label>
    </interactant>
    <organismsDiffer>false</organismsDiffer>
    <experiments>3</experiments>
</comment>
<comment type="interaction">
    <interactant intactId="EBI-12000556">
        <id>Q9Y2H0-1</id>
    </interactant>
    <interactant intactId="EBI-2513978">
        <id>Q8N3R9</id>
        <label>PALS1</label>
    </interactant>
    <organismsDiffer>false</organismsDiffer>
    <experiments>3</experiments>
</comment>
<comment type="interaction">
    <interactant intactId="EBI-12000556">
        <id>Q9Y2H0-1</id>
    </interactant>
    <interactant intactId="EBI-12037893">
        <id>O94875-10</id>
        <label>SORBS2</label>
    </interactant>
    <organismsDiffer>false</organismsDiffer>
    <experiments>3</experiments>
</comment>
<comment type="interaction">
    <interactant intactId="EBI-12000556">
        <id>Q9Y2H0-1</id>
    </interactant>
    <interactant intactId="EBI-7353612">
        <id>P57075-2</id>
        <label>UBASH3A</label>
    </interactant>
    <organismsDiffer>false</organismsDiffer>
    <experiments>3</experiments>
</comment>
<comment type="subcellular location">
    <subcellularLocation>
        <location evidence="1">Membrane</location>
        <topology evidence="1">Peripheral membrane protein</topology>
    </subcellularLocation>
</comment>
<comment type="alternative products">
    <event type="alternative splicing"/>
    <isoform>
        <id>Q9Y2H0-2</id>
        <name>1</name>
        <sequence type="displayed"/>
    </isoform>
    <isoform>
        <id>Q9Y2H0-1</id>
        <name>2</name>
        <sequence type="described" ref="VSP_006013"/>
    </isoform>
    <isoform>
        <id>Q9Y2H0-3</id>
        <name>3</name>
        <sequence type="described" ref="VSP_034910 VSP_034911"/>
    </isoform>
</comment>
<comment type="similarity">
    <text evidence="7">Belongs to the SAPAP family.</text>
</comment>
<comment type="sequence caution" evidence="7">
    <conflict type="erroneous initiation">
        <sequence resource="EMBL-CDS" id="BAA76808"/>
    </conflict>
</comment>
<reference key="1">
    <citation type="journal article" date="1999" name="DNA Res.">
        <title>Prediction of the coding sequences of unidentified human genes. XIII. The complete sequences of 100 new cDNA clones from brain which code for large proteins in vitro.</title>
        <authorList>
            <person name="Nagase T."/>
            <person name="Ishikawa K."/>
            <person name="Suyama M."/>
            <person name="Kikuno R."/>
            <person name="Hirosawa M."/>
            <person name="Miyajima N."/>
            <person name="Tanaka A."/>
            <person name="Kotani H."/>
            <person name="Nomura N."/>
            <person name="Ohara O."/>
        </authorList>
    </citation>
    <scope>NUCLEOTIDE SEQUENCE [LARGE SCALE MRNA] (ISOFORM 2)</scope>
    <source>
        <tissue>Brain</tissue>
    </source>
</reference>
<reference key="2">
    <citation type="journal article" date="2001" name="Nature">
        <title>The DNA sequence and comparative analysis of human chromosome 20.</title>
        <authorList>
            <person name="Deloukas P."/>
            <person name="Matthews L.H."/>
            <person name="Ashurst J.L."/>
            <person name="Burton J."/>
            <person name="Gilbert J.G.R."/>
            <person name="Jones M."/>
            <person name="Stavrides G."/>
            <person name="Almeida J.P."/>
            <person name="Babbage A.K."/>
            <person name="Bagguley C.L."/>
            <person name="Bailey J."/>
            <person name="Barlow K.F."/>
            <person name="Bates K.N."/>
            <person name="Beard L.M."/>
            <person name="Beare D.M."/>
            <person name="Beasley O.P."/>
            <person name="Bird C.P."/>
            <person name="Blakey S.E."/>
            <person name="Bridgeman A.M."/>
            <person name="Brown A.J."/>
            <person name="Buck D."/>
            <person name="Burrill W.D."/>
            <person name="Butler A.P."/>
            <person name="Carder C."/>
            <person name="Carter N.P."/>
            <person name="Chapman J.C."/>
            <person name="Clamp M."/>
            <person name="Clark G."/>
            <person name="Clark L.N."/>
            <person name="Clark S.Y."/>
            <person name="Clee C.M."/>
            <person name="Clegg S."/>
            <person name="Cobley V.E."/>
            <person name="Collier R.E."/>
            <person name="Connor R.E."/>
            <person name="Corby N.R."/>
            <person name="Coulson A."/>
            <person name="Coville G.J."/>
            <person name="Deadman R."/>
            <person name="Dhami P.D."/>
            <person name="Dunn M."/>
            <person name="Ellington A.G."/>
            <person name="Frankland J.A."/>
            <person name="Fraser A."/>
            <person name="French L."/>
            <person name="Garner P."/>
            <person name="Grafham D.V."/>
            <person name="Griffiths C."/>
            <person name="Griffiths M.N.D."/>
            <person name="Gwilliam R."/>
            <person name="Hall R.E."/>
            <person name="Hammond S."/>
            <person name="Harley J.L."/>
            <person name="Heath P.D."/>
            <person name="Ho S."/>
            <person name="Holden J.L."/>
            <person name="Howden P.J."/>
            <person name="Huckle E."/>
            <person name="Hunt A.R."/>
            <person name="Hunt S.E."/>
            <person name="Jekosch K."/>
            <person name="Johnson C.M."/>
            <person name="Johnson D."/>
            <person name="Kay M.P."/>
            <person name="Kimberley A.M."/>
            <person name="King A."/>
            <person name="Knights A."/>
            <person name="Laird G.K."/>
            <person name="Lawlor S."/>
            <person name="Lehvaeslaiho M.H."/>
            <person name="Leversha M.A."/>
            <person name="Lloyd C."/>
            <person name="Lloyd D.M."/>
            <person name="Lovell J.D."/>
            <person name="Marsh V.L."/>
            <person name="Martin S.L."/>
            <person name="McConnachie L.J."/>
            <person name="McLay K."/>
            <person name="McMurray A.A."/>
            <person name="Milne S.A."/>
            <person name="Mistry D."/>
            <person name="Moore M.J.F."/>
            <person name="Mullikin J.C."/>
            <person name="Nickerson T."/>
            <person name="Oliver K."/>
            <person name="Parker A."/>
            <person name="Patel R."/>
            <person name="Pearce T.A.V."/>
            <person name="Peck A.I."/>
            <person name="Phillimore B.J.C.T."/>
            <person name="Prathalingam S.R."/>
            <person name="Plumb R.W."/>
            <person name="Ramsay H."/>
            <person name="Rice C.M."/>
            <person name="Ross M.T."/>
            <person name="Scott C.E."/>
            <person name="Sehra H.K."/>
            <person name="Shownkeen R."/>
            <person name="Sims S."/>
            <person name="Skuce C.D."/>
            <person name="Smith M.L."/>
            <person name="Soderlund C."/>
            <person name="Steward C.A."/>
            <person name="Sulston J.E."/>
            <person name="Swann R.M."/>
            <person name="Sycamore N."/>
            <person name="Taylor R."/>
            <person name="Tee L."/>
            <person name="Thomas D.W."/>
            <person name="Thorpe A."/>
            <person name="Tracey A."/>
            <person name="Tromans A.C."/>
            <person name="Vaudin M."/>
            <person name="Wall M."/>
            <person name="Wallis J.M."/>
            <person name="Whitehead S.L."/>
            <person name="Whittaker P."/>
            <person name="Willey D.L."/>
            <person name="Williams L."/>
            <person name="Williams S.A."/>
            <person name="Wilming L."/>
            <person name="Wray P.W."/>
            <person name="Hubbard T."/>
            <person name="Durbin R.M."/>
            <person name="Bentley D.R."/>
            <person name="Beck S."/>
            <person name="Rogers J."/>
        </authorList>
    </citation>
    <scope>NUCLEOTIDE SEQUENCE [LARGE SCALE GENOMIC DNA]</scope>
</reference>
<reference key="3">
    <citation type="submission" date="2005-09" db="EMBL/GenBank/DDBJ databases">
        <authorList>
            <person name="Mural R.J."/>
            <person name="Istrail S."/>
            <person name="Sutton G.G."/>
            <person name="Florea L."/>
            <person name="Halpern A.L."/>
            <person name="Mobarry C.M."/>
            <person name="Lippert R."/>
            <person name="Walenz B."/>
            <person name="Shatkay H."/>
            <person name="Dew I."/>
            <person name="Miller J.R."/>
            <person name="Flanigan M.J."/>
            <person name="Edwards N.J."/>
            <person name="Bolanos R."/>
            <person name="Fasulo D."/>
            <person name="Halldorsson B.V."/>
            <person name="Hannenhalli S."/>
            <person name="Turner R."/>
            <person name="Yooseph S."/>
            <person name="Lu F."/>
            <person name="Nusskern D.R."/>
            <person name="Shue B.C."/>
            <person name="Zheng X.H."/>
            <person name="Zhong F."/>
            <person name="Delcher A.L."/>
            <person name="Huson D.H."/>
            <person name="Kravitz S.A."/>
            <person name="Mouchard L."/>
            <person name="Reinert K."/>
            <person name="Remington K.A."/>
            <person name="Clark A.G."/>
            <person name="Waterman M.S."/>
            <person name="Eichler E.E."/>
            <person name="Adams M.D."/>
            <person name="Hunkapiller M.W."/>
            <person name="Myers E.W."/>
            <person name="Venter J.C."/>
        </authorList>
    </citation>
    <scope>NUCLEOTIDE SEQUENCE [LARGE SCALE GENOMIC DNA]</scope>
</reference>
<reference key="4">
    <citation type="journal article" date="2004" name="Genome Res.">
        <title>The status, quality, and expansion of the NIH full-length cDNA project: the Mammalian Gene Collection (MGC).</title>
        <authorList>
            <consortium name="The MGC Project Team"/>
        </authorList>
    </citation>
    <scope>NUCLEOTIDE SEQUENCE [LARGE SCALE MRNA] (ISOFORM 3)</scope>
    <source>
        <tissue>PNS</tissue>
    </source>
</reference>
<reference key="5">
    <citation type="journal article" date="2008" name="Proc. Natl. Acad. Sci. U.S.A.">
        <title>A quantitative atlas of mitotic phosphorylation.</title>
        <authorList>
            <person name="Dephoure N."/>
            <person name="Zhou C."/>
            <person name="Villen J."/>
            <person name="Beausoleil S.A."/>
            <person name="Bakalarski C.E."/>
            <person name="Elledge S.J."/>
            <person name="Gygi S.P."/>
        </authorList>
    </citation>
    <scope>PHOSPHORYLATION [LARGE SCALE ANALYSIS] AT THR-915</scope>
    <scope>IDENTIFICATION BY MASS SPECTROMETRY [LARGE SCALE ANALYSIS]</scope>
    <source>
        <tissue>Cervix carcinoma</tissue>
    </source>
</reference>
<reference key="6">
    <citation type="journal article" date="2009" name="Anal. Chem.">
        <title>Lys-N and trypsin cover complementary parts of the phosphoproteome in a refined SCX-based approach.</title>
        <authorList>
            <person name="Gauci S."/>
            <person name="Helbig A.O."/>
            <person name="Slijper M."/>
            <person name="Krijgsveld J."/>
            <person name="Heck A.J."/>
            <person name="Mohammed S."/>
        </authorList>
    </citation>
    <scope>IDENTIFICATION BY MASS SPECTROMETRY [LARGE SCALE ANALYSIS]</scope>
</reference>
<reference key="7">
    <citation type="journal article" date="2010" name="Sci. Signal.">
        <title>Quantitative phosphoproteomics reveals widespread full phosphorylation site occupancy during mitosis.</title>
        <authorList>
            <person name="Olsen J.V."/>
            <person name="Vermeulen M."/>
            <person name="Santamaria A."/>
            <person name="Kumar C."/>
            <person name="Miller M.L."/>
            <person name="Jensen L.J."/>
            <person name="Gnad F."/>
            <person name="Cox J."/>
            <person name="Jensen T.S."/>
            <person name="Nigg E.A."/>
            <person name="Brunak S."/>
            <person name="Mann M."/>
        </authorList>
    </citation>
    <scope>PHOSPHORYLATION [LARGE SCALE ANALYSIS] AT THR-915</scope>
    <scope>IDENTIFICATION BY MASS SPECTROMETRY [LARGE SCALE ANALYSIS]</scope>
    <source>
        <tissue>Cervix carcinoma</tissue>
    </source>
</reference>
<reference key="8">
    <citation type="journal article" date="2011" name="Sci. Signal.">
        <title>System-wide temporal characterization of the proteome and phosphoproteome of human embryonic stem cell differentiation.</title>
        <authorList>
            <person name="Rigbolt K.T."/>
            <person name="Prokhorova T.A."/>
            <person name="Akimov V."/>
            <person name="Henningsen J."/>
            <person name="Johansen P.T."/>
            <person name="Kratchmarova I."/>
            <person name="Kassem M."/>
            <person name="Mann M."/>
            <person name="Olsen J.V."/>
            <person name="Blagoev B."/>
        </authorList>
    </citation>
    <scope>PHOSPHORYLATION [LARGE SCALE ANALYSIS] AT THR-915</scope>
    <scope>IDENTIFICATION BY MASS SPECTROMETRY [LARGE SCALE ANALYSIS]</scope>
</reference>
<reference key="9">
    <citation type="journal article" date="2013" name="J. Proteome Res.">
        <title>Toward a comprehensive characterization of a human cancer cell phosphoproteome.</title>
        <authorList>
            <person name="Zhou H."/>
            <person name="Di Palma S."/>
            <person name="Preisinger C."/>
            <person name="Peng M."/>
            <person name="Polat A.N."/>
            <person name="Heck A.J."/>
            <person name="Mohammed S."/>
        </authorList>
    </citation>
    <scope>PHOSPHORYLATION [LARGE SCALE ANALYSIS] AT SER-665; SER-744; THR-915 AND SER-973</scope>
    <scope>IDENTIFICATION BY MASS SPECTROMETRY [LARGE SCALE ANALYSIS]</scope>
    <source>
        <tissue>Cervix carcinoma</tissue>
        <tissue>Erythroleukemia</tissue>
    </source>
</reference>
<reference key="10">
    <citation type="journal article" date="2014" name="J. Proteomics">
        <title>An enzyme assisted RP-RPLC approach for in-depth analysis of human liver phosphoproteome.</title>
        <authorList>
            <person name="Bian Y."/>
            <person name="Song C."/>
            <person name="Cheng K."/>
            <person name="Dong M."/>
            <person name="Wang F."/>
            <person name="Huang J."/>
            <person name="Sun D."/>
            <person name="Wang L."/>
            <person name="Ye M."/>
            <person name="Zou H."/>
        </authorList>
    </citation>
    <scope>IDENTIFICATION BY MASS SPECTROMETRY [LARGE SCALE ANALYSIS]</scope>
    <source>
        <tissue>Liver</tissue>
    </source>
</reference>
<name>DLGP4_HUMAN</name>
<protein>
    <recommendedName>
        <fullName>Disks large-associated protein 4</fullName>
        <shortName>DAP-4</shortName>
    </recommendedName>
    <alternativeName>
        <fullName>PSD-95/SAP90-binding protein 4</fullName>
    </alternativeName>
    <alternativeName>
        <fullName>SAP90/PSD-95-associated protein 4</fullName>
        <shortName>SAPAP-4</shortName>
    </alternativeName>
</protein>
<keyword id="KW-0025">Alternative splicing</keyword>
<keyword id="KW-0472">Membrane</keyword>
<keyword id="KW-0488">Methylation</keyword>
<keyword id="KW-0597">Phosphoprotein</keyword>
<keyword id="KW-1267">Proteomics identification</keyword>
<keyword id="KW-1185">Reference proteome</keyword>
<gene>
    <name type="primary">DLGAP4</name>
    <name type="synonym">DAP4</name>
    <name type="synonym">KIAA0964</name>
    <name type="synonym">SAPAP4</name>
</gene>
<feature type="chain" id="PRO_0000174297" description="Disks large-associated protein 4">
    <location>
        <begin position="1"/>
        <end position="992"/>
    </location>
</feature>
<feature type="region of interest" description="Disordered" evidence="4">
    <location>
        <begin position="1"/>
        <end position="30"/>
    </location>
</feature>
<feature type="region of interest" description="Disordered" evidence="4">
    <location>
        <begin position="47"/>
        <end position="66"/>
    </location>
</feature>
<feature type="region of interest" description="Disordered" evidence="4">
    <location>
        <begin position="157"/>
        <end position="206"/>
    </location>
</feature>
<feature type="region of interest" description="Disordered" evidence="4">
    <location>
        <begin position="342"/>
        <end position="396"/>
    </location>
</feature>
<feature type="region of interest" description="Disordered" evidence="4">
    <location>
        <begin position="527"/>
        <end position="751"/>
    </location>
</feature>
<feature type="region of interest" description="Disordered" evidence="4">
    <location>
        <begin position="763"/>
        <end position="798"/>
    </location>
</feature>
<feature type="region of interest" description="Disordered" evidence="4">
    <location>
        <begin position="915"/>
        <end position="992"/>
    </location>
</feature>
<feature type="compositionally biased region" description="Basic and acidic residues" evidence="4">
    <location>
        <begin position="1"/>
        <end position="20"/>
    </location>
</feature>
<feature type="compositionally biased region" description="Gly residues" evidence="4">
    <location>
        <begin position="162"/>
        <end position="171"/>
    </location>
</feature>
<feature type="compositionally biased region" description="Basic and acidic residues" evidence="4">
    <location>
        <begin position="172"/>
        <end position="194"/>
    </location>
</feature>
<feature type="compositionally biased region" description="Low complexity" evidence="4">
    <location>
        <begin position="528"/>
        <end position="554"/>
    </location>
</feature>
<feature type="compositionally biased region" description="Polar residues" evidence="4">
    <location>
        <begin position="576"/>
        <end position="591"/>
    </location>
</feature>
<feature type="compositionally biased region" description="Low complexity" evidence="4">
    <location>
        <begin position="600"/>
        <end position="620"/>
    </location>
</feature>
<feature type="compositionally biased region" description="Basic and acidic residues" evidence="4">
    <location>
        <begin position="915"/>
        <end position="925"/>
    </location>
</feature>
<feature type="compositionally biased region" description="Basic and acidic residues" evidence="4">
    <location>
        <begin position="940"/>
        <end position="958"/>
    </location>
</feature>
<feature type="compositionally biased region" description="Polar residues" evidence="4">
    <location>
        <begin position="969"/>
        <end position="978"/>
    </location>
</feature>
<feature type="modified residue" description="Phosphoserine" evidence="3">
    <location>
        <position position="206"/>
    </location>
</feature>
<feature type="modified residue" description="Phosphoserine" evidence="2">
    <location>
        <position position="207"/>
    </location>
</feature>
<feature type="modified residue" description="Omega-N-methylarginine" evidence="2">
    <location>
        <position position="291"/>
    </location>
</feature>
<feature type="modified residue" description="Phosphoserine" evidence="2">
    <location>
        <position position="378"/>
    </location>
</feature>
<feature type="modified residue" description="Phosphoserine" evidence="3">
    <location>
        <position position="381"/>
    </location>
</feature>
<feature type="modified residue" description="Phosphoserine" evidence="2">
    <location>
        <position position="388"/>
    </location>
</feature>
<feature type="modified residue" description="Phosphoserine" evidence="2">
    <location>
        <position position="405"/>
    </location>
</feature>
<feature type="modified residue" description="Phosphoserine" evidence="2">
    <location>
        <position position="415"/>
    </location>
</feature>
<feature type="modified residue" description="Phosphoserine" evidence="2">
    <location>
        <position position="421"/>
    </location>
</feature>
<feature type="modified residue" description="Phosphoserine" evidence="2">
    <location>
        <position position="580"/>
    </location>
</feature>
<feature type="modified residue" description="Phosphoserine" evidence="2">
    <location>
        <position position="581"/>
    </location>
</feature>
<feature type="modified residue" description="Phosphoserine" evidence="2">
    <location>
        <position position="609"/>
    </location>
</feature>
<feature type="modified residue" description="Phosphoserine" evidence="2">
    <location>
        <position position="611"/>
    </location>
</feature>
<feature type="modified residue" description="Phosphoserine" evidence="11">
    <location>
        <position position="665"/>
    </location>
</feature>
<feature type="modified residue" description="Phosphoserine" evidence="11">
    <location>
        <position position="744"/>
    </location>
</feature>
<feature type="modified residue" description="Phosphothreonine" evidence="8 9 10 11">
    <location>
        <position position="915"/>
    </location>
</feature>
<feature type="modified residue" description="Phosphoserine" evidence="11">
    <location>
        <position position="973"/>
    </location>
</feature>
<feature type="splice variant" id="VSP_034910" description="In isoform 3." evidence="6">
    <location>
        <begin position="1"/>
        <end position="539"/>
    </location>
</feature>
<feature type="splice variant" id="VSP_034911" description="In isoform 3." evidence="6">
    <original>GSLSNSRTLPS</original>
    <variation>MALCLELLKQC</variation>
    <location>
        <begin position="540"/>
        <end position="550"/>
    </location>
</feature>
<feature type="splice variant" id="VSP_006013" description="In isoform 2." evidence="5">
    <original>VDCIQPVPKEEPSPATKFQSIGVQVEDDWR</original>
    <variation>ERTRRNGSHLSEDNGPKAIDVMAPSSE</variation>
    <location>
        <begin position="671"/>
        <end position="700"/>
    </location>
</feature>
<feature type="sequence variant" id="VAR_057716" description="In dbSNP:rs6019652.">
    <original>A</original>
    <variation>T</variation>
    <location>
        <position position="486"/>
    </location>
</feature>
<feature type="sequence variant" id="VAR_057717" description="In dbSNP:rs2275807.">
    <original>R</original>
    <variation>Q</variation>
    <location>
        <position position="861"/>
    </location>
</feature>
<feature type="sequence conflict" description="In Ref. 1; BAA76808." evidence="7" ref="1">
    <original>T</original>
    <variation>I</variation>
    <location>
        <position position="229"/>
    </location>
</feature>
<evidence type="ECO:0000250" key="1"/>
<evidence type="ECO:0000250" key="2">
    <source>
        <dbReference type="UniProtKB" id="B1AZP2"/>
    </source>
</evidence>
<evidence type="ECO:0000250" key="3">
    <source>
        <dbReference type="UniProtKB" id="P97839"/>
    </source>
</evidence>
<evidence type="ECO:0000256" key="4">
    <source>
        <dbReference type="SAM" id="MobiDB-lite"/>
    </source>
</evidence>
<evidence type="ECO:0000303" key="5">
    <source>
    </source>
</evidence>
<evidence type="ECO:0000303" key="6">
    <source>
    </source>
</evidence>
<evidence type="ECO:0000305" key="7"/>
<evidence type="ECO:0007744" key="8">
    <source>
    </source>
</evidence>
<evidence type="ECO:0007744" key="9">
    <source>
    </source>
</evidence>
<evidence type="ECO:0007744" key="10">
    <source>
    </source>
</evidence>
<evidence type="ECO:0007744" key="11">
    <source>
    </source>
</evidence>
<sequence>MKGLGDSRPRHLSDSLDPPHEPLFAGTDRNPYLLSPTEAFAREARFPGQNTLPGDGLFPLNNQLPPPSSTFPRIHYNSHFEVPEESPFPSHAQATKINRLPANLLDQFEKQLPIHRDGFSTLQFPRGEAKARGESPGRIRHLVHSVQRLFFTKAPSLEGTAGKVGGNGSKKGGMEDGKGRRAKSKERAKAGEPKRRSRSNISGWWSSDDNLDGEAGAFRSSGPASGLMTLGRQAERSQPRYFMHAYNTISGHMLKTTKNNTTELTAPPPPPAPPATCPSLGVGTDTNYVKRGSWSTLTLSHAHEVCQKTSATLDKSLLKSKSCHQGLAYHYLQVPGGGGEWSTTLLSPRETDAAAEGPIPCRRMRSGSYIKAMGDEDSDESGGSPKPSPKTAARRQSYLRATQQSLGEQSNPRRSLDRLDSVDMLLPSKCPSWEEDYTPVSDSLNDSSCISQIFGQASLIPQLFGHEQQVREAELSDQYEAACESACSEAESTAAETLDLPLPSYFRSRSHSYLRAIQAGCSQEEDSVSLQSLSPPPSTGSLSNSRTLPSSSCLVAYKKTPPPVPPRTTSKPFISVTVQSSTESAQDTYLDSQDHKSEVTSQSGLSNSSDSLDSSTRPPSVTRGGVAPAPEAPEPPPKHAALKSEQGTLTSSESHPEAAPKRKLSSIGIQVDCIQPVPKEEPSPATKFQSIGVQVEDDWRSSVPSHSMSSRRDTDSDTQDANDSSCKSSERSLPDCTPHPNSISIDAGPRQAPKIAQIKRNLSYGDNSDPALEASSLPPPDPWLETSSSSPAEPAQPGACRRDGYWFLKLLQAETERLEGWCCQMDKETKENNLSEEVLGKVLSAVGSAQLLMSQKFQQFRGLCEQNLNPDANPRPTAQDLAGFWDLLQLSIEDISMKFDELYHLKANSWQLVETPEKRKEEKKPPPPVPKKPAKSKPAVSRDKASDASDKQRQEARKRLLAAKRAASVRQNSATESADSIEIYVPEAQTRL</sequence>
<organism>
    <name type="scientific">Homo sapiens</name>
    <name type="common">Human</name>
    <dbReference type="NCBI Taxonomy" id="9606"/>
    <lineage>
        <taxon>Eukaryota</taxon>
        <taxon>Metazoa</taxon>
        <taxon>Chordata</taxon>
        <taxon>Craniata</taxon>
        <taxon>Vertebrata</taxon>
        <taxon>Euteleostomi</taxon>
        <taxon>Mammalia</taxon>
        <taxon>Eutheria</taxon>
        <taxon>Euarchontoglires</taxon>
        <taxon>Primates</taxon>
        <taxon>Haplorrhini</taxon>
        <taxon>Catarrhini</taxon>
        <taxon>Hominidae</taxon>
        <taxon>Homo</taxon>
    </lineage>
</organism>
<dbReference type="EMBL" id="AB023181">
    <property type="protein sequence ID" value="BAA76808.2"/>
    <property type="status" value="ALT_INIT"/>
    <property type="molecule type" value="mRNA"/>
</dbReference>
<dbReference type="EMBL" id="AL390374">
    <property type="status" value="NOT_ANNOTATED_CDS"/>
    <property type="molecule type" value="Genomic_DNA"/>
</dbReference>
<dbReference type="EMBL" id="AL050318">
    <property type="status" value="NOT_ANNOTATED_CDS"/>
    <property type="molecule type" value="Genomic_DNA"/>
</dbReference>
<dbReference type="EMBL" id="CH471077">
    <property type="protein sequence ID" value="EAW76140.1"/>
    <property type="molecule type" value="Genomic_DNA"/>
</dbReference>
<dbReference type="EMBL" id="CH471077">
    <property type="protein sequence ID" value="EAW76135.1"/>
    <property type="molecule type" value="Genomic_DNA"/>
</dbReference>
<dbReference type="EMBL" id="CH471077">
    <property type="protein sequence ID" value="EAW76136.1"/>
    <property type="molecule type" value="Genomic_DNA"/>
</dbReference>
<dbReference type="EMBL" id="BC108706">
    <property type="protein sequence ID" value="AAI08707.1"/>
    <property type="molecule type" value="mRNA"/>
</dbReference>
<dbReference type="EMBL" id="BC153874">
    <property type="protein sequence ID" value="AAI53875.1"/>
    <property type="molecule type" value="mRNA"/>
</dbReference>
<dbReference type="CCDS" id="CCDS13274.1">
    <molecule id="Q9Y2H0-1"/>
</dbReference>
<dbReference type="CCDS" id="CCDS13275.1">
    <molecule id="Q9Y2H0-3"/>
</dbReference>
<dbReference type="CCDS" id="CCDS93034.1">
    <molecule id="Q9Y2H0-2"/>
</dbReference>
<dbReference type="RefSeq" id="NP_001035951.1">
    <property type="nucleotide sequence ID" value="NM_001042486.3"/>
</dbReference>
<dbReference type="RefSeq" id="NP_001352550.1">
    <molecule id="Q9Y2H0-2"/>
    <property type="nucleotide sequence ID" value="NM_001365621.2"/>
</dbReference>
<dbReference type="RefSeq" id="NP_055717.2">
    <molecule id="Q9Y2H0-1"/>
    <property type="nucleotide sequence ID" value="NM_014902.5"/>
</dbReference>
<dbReference type="RefSeq" id="NP_892118.1">
    <molecule id="Q9Y2H0-3"/>
    <property type="nucleotide sequence ID" value="NM_183006.4"/>
</dbReference>
<dbReference type="RefSeq" id="XP_011526990.1">
    <property type="nucleotide sequence ID" value="XM_011528688.2"/>
</dbReference>
<dbReference type="SMR" id="Q9Y2H0"/>
<dbReference type="BioGRID" id="116513">
    <property type="interactions" value="89"/>
</dbReference>
<dbReference type="CORUM" id="Q9Y2H0"/>
<dbReference type="FunCoup" id="Q9Y2H0">
    <property type="interactions" value="466"/>
</dbReference>
<dbReference type="IntAct" id="Q9Y2H0">
    <property type="interactions" value="66"/>
</dbReference>
<dbReference type="MINT" id="Q9Y2H0"/>
<dbReference type="STRING" id="9606.ENSP00000363023"/>
<dbReference type="GlyCosmos" id="Q9Y2H0">
    <property type="glycosylation" value="1 site, 1 glycan"/>
</dbReference>
<dbReference type="GlyGen" id="Q9Y2H0">
    <property type="glycosylation" value="2 sites, 1 N-linked glycan (1 site), 1 O-linked glycan (1 site)"/>
</dbReference>
<dbReference type="iPTMnet" id="Q9Y2H0"/>
<dbReference type="PhosphoSitePlus" id="Q9Y2H0"/>
<dbReference type="SwissPalm" id="Q9Y2H0"/>
<dbReference type="BioMuta" id="DLGAP4"/>
<dbReference type="DMDM" id="205831580"/>
<dbReference type="jPOST" id="Q9Y2H0"/>
<dbReference type="MassIVE" id="Q9Y2H0"/>
<dbReference type="PaxDb" id="9606-ENSP00000363023"/>
<dbReference type="PeptideAtlas" id="Q9Y2H0"/>
<dbReference type="ProteomicsDB" id="85777">
    <molecule id="Q9Y2H0-2"/>
</dbReference>
<dbReference type="ProteomicsDB" id="85778">
    <molecule id="Q9Y2H0-1"/>
</dbReference>
<dbReference type="ProteomicsDB" id="85779">
    <molecule id="Q9Y2H0-3"/>
</dbReference>
<dbReference type="Pumba" id="Q9Y2H0"/>
<dbReference type="Antibodypedia" id="26505">
    <property type="antibodies" value="121 antibodies from 27 providers"/>
</dbReference>
<dbReference type="DNASU" id="22839"/>
<dbReference type="Ensembl" id="ENST00000339266.10">
    <molecule id="Q9Y2H0-2"/>
    <property type="protein sequence ID" value="ENSP00000341633.5"/>
    <property type="gene ID" value="ENSG00000080845.19"/>
</dbReference>
<dbReference type="Ensembl" id="ENST00000340491.8">
    <molecule id="Q9Y2H0-3"/>
    <property type="protein sequence ID" value="ENSP00000345700.4"/>
    <property type="gene ID" value="ENSG00000080845.19"/>
</dbReference>
<dbReference type="Ensembl" id="ENST00000373907.6">
    <molecule id="Q9Y2H0-2"/>
    <property type="protein sequence ID" value="ENSP00000363014.2"/>
    <property type="gene ID" value="ENSG00000080845.19"/>
</dbReference>
<dbReference type="Ensembl" id="ENST00000373913.7">
    <molecule id="Q9Y2H0-1"/>
    <property type="protein sequence ID" value="ENSP00000363023.3"/>
    <property type="gene ID" value="ENSG00000080845.19"/>
</dbReference>
<dbReference type="GeneID" id="22839"/>
<dbReference type="KEGG" id="hsa:22839"/>
<dbReference type="MANE-Select" id="ENST00000339266.10">
    <property type="protein sequence ID" value="ENSP00000341633.5"/>
    <property type="RefSeq nucleotide sequence ID" value="NM_001365621.2"/>
    <property type="RefSeq protein sequence ID" value="NP_001352550.1"/>
</dbReference>
<dbReference type="UCSC" id="uc002xff.4">
    <molecule id="Q9Y2H0-2"/>
    <property type="organism name" value="human"/>
</dbReference>
<dbReference type="AGR" id="HGNC:24476"/>
<dbReference type="CTD" id="22839"/>
<dbReference type="DisGeNET" id="22839"/>
<dbReference type="GeneCards" id="DLGAP4"/>
<dbReference type="HGNC" id="HGNC:24476">
    <property type="gene designation" value="DLGAP4"/>
</dbReference>
<dbReference type="HPA" id="ENSG00000080845">
    <property type="expression patterns" value="Low tissue specificity"/>
</dbReference>
<dbReference type="MalaCards" id="DLGAP4"/>
<dbReference type="MIM" id="616191">
    <property type="type" value="gene"/>
</dbReference>
<dbReference type="neXtProt" id="NX_Q9Y2H0"/>
<dbReference type="OpenTargets" id="ENSG00000080845"/>
<dbReference type="PharmGKB" id="PA134891458"/>
<dbReference type="VEuPathDB" id="HostDB:ENSG00000080845"/>
<dbReference type="eggNOG" id="KOG3971">
    <property type="taxonomic scope" value="Eukaryota"/>
</dbReference>
<dbReference type="GeneTree" id="ENSGT00940000155308"/>
<dbReference type="HOGENOM" id="CLU_010880_0_0_1"/>
<dbReference type="InParanoid" id="Q9Y2H0"/>
<dbReference type="OMA" id="QIFSHEE"/>
<dbReference type="OrthoDB" id="10036956at2759"/>
<dbReference type="PAN-GO" id="Q9Y2H0">
    <property type="GO annotations" value="4 GO annotations based on evolutionary models"/>
</dbReference>
<dbReference type="PhylomeDB" id="Q9Y2H0"/>
<dbReference type="TreeFam" id="TF321382"/>
<dbReference type="PathwayCommons" id="Q9Y2H0"/>
<dbReference type="Reactome" id="R-HSA-6794361">
    <property type="pathway name" value="Neurexins and neuroligins"/>
</dbReference>
<dbReference type="SignaLink" id="Q9Y2H0"/>
<dbReference type="SIGNOR" id="Q9Y2H0"/>
<dbReference type="BioGRID-ORCS" id="22839">
    <property type="hits" value="18 hits in 1159 CRISPR screens"/>
</dbReference>
<dbReference type="CD-CODE" id="FB4E32DD">
    <property type="entry name" value="Presynaptic clusters and postsynaptic densities"/>
</dbReference>
<dbReference type="ChiTaRS" id="DLGAP4">
    <property type="organism name" value="human"/>
</dbReference>
<dbReference type="GeneWiki" id="DLGAP4"/>
<dbReference type="GenomeRNAi" id="22839"/>
<dbReference type="Pharos" id="Q9Y2H0">
    <property type="development level" value="Tbio"/>
</dbReference>
<dbReference type="PRO" id="PR:Q9Y2H0"/>
<dbReference type="Proteomes" id="UP000005640">
    <property type="component" value="Chromosome 20"/>
</dbReference>
<dbReference type="RNAct" id="Q9Y2H0">
    <property type="molecule type" value="protein"/>
</dbReference>
<dbReference type="Bgee" id="ENSG00000080845">
    <property type="expression patterns" value="Expressed in cortical plate and 195 other cell types or tissues"/>
</dbReference>
<dbReference type="ExpressionAtlas" id="Q9Y2H0">
    <property type="expression patterns" value="baseline and differential"/>
</dbReference>
<dbReference type="GO" id="GO:0098981">
    <property type="term" value="C:cholinergic synapse"/>
    <property type="evidence" value="ECO:0007669"/>
    <property type="project" value="Ensembl"/>
</dbReference>
<dbReference type="GO" id="GO:0098978">
    <property type="term" value="C:glutamatergic synapse"/>
    <property type="evidence" value="ECO:0000318"/>
    <property type="project" value="GO_Central"/>
</dbReference>
<dbReference type="GO" id="GO:0031594">
    <property type="term" value="C:neuromuscular junction"/>
    <property type="evidence" value="ECO:0007669"/>
    <property type="project" value="Ensembl"/>
</dbReference>
<dbReference type="GO" id="GO:0005886">
    <property type="term" value="C:plasma membrane"/>
    <property type="evidence" value="ECO:0000304"/>
    <property type="project" value="Reactome"/>
</dbReference>
<dbReference type="GO" id="GO:0099572">
    <property type="term" value="C:postsynaptic specialization"/>
    <property type="evidence" value="ECO:0000318"/>
    <property type="project" value="GO_Central"/>
</dbReference>
<dbReference type="GO" id="GO:0060090">
    <property type="term" value="F:molecular adaptor activity"/>
    <property type="evidence" value="ECO:0000318"/>
    <property type="project" value="GO_Central"/>
</dbReference>
<dbReference type="GO" id="GO:0099010">
    <property type="term" value="P:modification of postsynaptic structure"/>
    <property type="evidence" value="ECO:0007669"/>
    <property type="project" value="Ensembl"/>
</dbReference>
<dbReference type="GO" id="GO:0050804">
    <property type="term" value="P:modulation of chemical synaptic transmission"/>
    <property type="evidence" value="ECO:0000318"/>
    <property type="project" value="GO_Central"/>
</dbReference>
<dbReference type="GO" id="GO:0090128">
    <property type="term" value="P:regulation of synapse maturation"/>
    <property type="evidence" value="ECO:0007669"/>
    <property type="project" value="Ensembl"/>
</dbReference>
<dbReference type="GO" id="GO:0023052">
    <property type="term" value="P:signaling"/>
    <property type="evidence" value="ECO:0007669"/>
    <property type="project" value="InterPro"/>
</dbReference>
<dbReference type="InterPro" id="IPR005026">
    <property type="entry name" value="SAPAP"/>
</dbReference>
<dbReference type="PANTHER" id="PTHR12353:SF19">
    <property type="entry name" value="DISKS LARGE-ASSOCIATED PROTEIN 4"/>
    <property type="match status" value="1"/>
</dbReference>
<dbReference type="PANTHER" id="PTHR12353">
    <property type="entry name" value="DISKS LARGE-ASSOCIATED PROTEIN DAP SAP90/PSD-95-ASSOCIATED PROTEIN"/>
    <property type="match status" value="1"/>
</dbReference>
<dbReference type="Pfam" id="PF03359">
    <property type="entry name" value="GKAP"/>
    <property type="match status" value="1"/>
</dbReference>
<accession>Q9Y2H0</accession>
<accession>E1P5T5</accession>
<accession>Q5QPG4</accession>
<accession>Q5T2Y4</accession>
<accession>Q5T2Y5</accession>
<accession>Q9H137</accession>
<accession>Q9H138</accession>
<accession>Q9H1L7</accession>